<organism>
    <name type="scientific">Streptococcus mutans serotype c (strain ATCC 700610 / UA159)</name>
    <dbReference type="NCBI Taxonomy" id="210007"/>
    <lineage>
        <taxon>Bacteria</taxon>
        <taxon>Bacillati</taxon>
        <taxon>Bacillota</taxon>
        <taxon>Bacilli</taxon>
        <taxon>Lactobacillales</taxon>
        <taxon>Streptococcaceae</taxon>
        <taxon>Streptococcus</taxon>
    </lineage>
</organism>
<evidence type="ECO:0000250" key="1"/>
<evidence type="ECO:0000255" key="2"/>
<evidence type="ECO:0000256" key="3">
    <source>
        <dbReference type="SAM" id="MobiDB-lite"/>
    </source>
</evidence>
<evidence type="ECO:0000269" key="4">
    <source>
    </source>
</evidence>
<evidence type="ECO:0000305" key="5"/>
<accession>Q8DSP8</accession>
<feature type="signal peptide" evidence="2">
    <location>
        <begin position="1"/>
        <end position="23"/>
    </location>
</feature>
<feature type="chain" id="PRO_0000020405" description="Membrane protein insertase YidC 2">
    <location>
        <begin position="24"/>
        <end position="310"/>
    </location>
</feature>
<feature type="transmembrane region" description="Helical" evidence="2">
    <location>
        <begin position="34"/>
        <end position="54"/>
    </location>
</feature>
<feature type="transmembrane region" description="Helical" evidence="2">
    <location>
        <begin position="57"/>
        <end position="77"/>
    </location>
</feature>
<feature type="transmembrane region" description="Helical" evidence="2">
    <location>
        <begin position="136"/>
        <end position="156"/>
    </location>
</feature>
<feature type="transmembrane region" description="Helical" evidence="2">
    <location>
        <begin position="180"/>
        <end position="200"/>
    </location>
</feature>
<feature type="transmembrane region" description="Helical" evidence="2">
    <location>
        <begin position="220"/>
        <end position="240"/>
    </location>
</feature>
<feature type="region of interest" description="Disordered" evidence="3">
    <location>
        <begin position="263"/>
        <end position="310"/>
    </location>
</feature>
<feature type="compositionally biased region" description="Basic and acidic residues" evidence="3">
    <location>
        <begin position="276"/>
        <end position="290"/>
    </location>
</feature>
<feature type="compositionally biased region" description="Basic residues" evidence="3">
    <location>
        <begin position="291"/>
        <end position="310"/>
    </location>
</feature>
<feature type="lipid moiety-binding region" description="N-palmitoyl cysteine" evidence="2">
    <location>
        <position position="24"/>
    </location>
</feature>
<feature type="lipid moiety-binding region" description="S-diacylglycerol cysteine" evidence="2">
    <location>
        <position position="24"/>
    </location>
</feature>
<gene>
    <name type="primary">yidC2</name>
    <name type="ordered locus">SMU_1727</name>
</gene>
<keyword id="KW-1003">Cell membrane</keyword>
<keyword id="KW-0143">Chaperone</keyword>
<keyword id="KW-0449">Lipoprotein</keyword>
<keyword id="KW-0472">Membrane</keyword>
<keyword id="KW-0564">Palmitate</keyword>
<keyword id="KW-0653">Protein transport</keyword>
<keyword id="KW-1185">Reference proteome</keyword>
<keyword id="KW-0732">Signal</keyword>
<keyword id="KW-0812">Transmembrane</keyword>
<keyword id="KW-1133">Transmembrane helix</keyword>
<keyword id="KW-0813">Transport</keyword>
<sequence length="310" mass="34908">MKKIYKRLLFSGLALSMLFFLSGCVQMKNGKPTGEGWVYKFFAAPMGSVIQYLANNLGLGFGFAIIIVTVIVRLLILPLGLSQVRKMTYQSEKMAYLKPVFDPIQERMKNAKTQEEKMAAQTELMQAQRHYGMSMFGGLGCLPLLIQMPFFSALYISTRYTKGIASASFLGIKLGSPNMIITVIIGILYLVQSWVSTLSVPEAQRQQTRNMMFMMPIMMVMISIGAPAGGALYWLVSGIFGLIQQLITNHIIKPKLRKQIDEEFKKNPPKPFKSNARKDITPQANNDKKLITSKKQKSNRNAGKQRHHKQ</sequence>
<dbReference type="EMBL" id="AE014133">
    <property type="protein sequence ID" value="AAN59360.1"/>
    <property type="molecule type" value="Genomic_DNA"/>
</dbReference>
<dbReference type="RefSeq" id="NP_722054.1">
    <property type="nucleotide sequence ID" value="NC_004350.2"/>
</dbReference>
<dbReference type="RefSeq" id="WP_002262549.1">
    <property type="nucleotide sequence ID" value="NC_004350.2"/>
</dbReference>
<dbReference type="SMR" id="Q8DSP8"/>
<dbReference type="STRING" id="210007.SMU_1727"/>
<dbReference type="KEGG" id="smu:SMU_1727"/>
<dbReference type="PATRIC" id="fig|210007.7.peg.1543"/>
<dbReference type="eggNOG" id="COG0706">
    <property type="taxonomic scope" value="Bacteria"/>
</dbReference>
<dbReference type="HOGENOM" id="CLU_036138_5_1_9"/>
<dbReference type="OrthoDB" id="9780552at2"/>
<dbReference type="PhylomeDB" id="Q8DSP8"/>
<dbReference type="Proteomes" id="UP000002512">
    <property type="component" value="Chromosome"/>
</dbReference>
<dbReference type="GO" id="GO:0005886">
    <property type="term" value="C:plasma membrane"/>
    <property type="evidence" value="ECO:0007669"/>
    <property type="project" value="UniProtKB-SubCell"/>
</dbReference>
<dbReference type="GO" id="GO:0032977">
    <property type="term" value="F:membrane insertase activity"/>
    <property type="evidence" value="ECO:0007669"/>
    <property type="project" value="InterPro"/>
</dbReference>
<dbReference type="GO" id="GO:0051205">
    <property type="term" value="P:protein insertion into membrane"/>
    <property type="evidence" value="ECO:0007669"/>
    <property type="project" value="TreeGrafter"/>
</dbReference>
<dbReference type="GO" id="GO:0015031">
    <property type="term" value="P:protein transport"/>
    <property type="evidence" value="ECO:0007669"/>
    <property type="project" value="UniProtKB-KW"/>
</dbReference>
<dbReference type="CDD" id="cd20070">
    <property type="entry name" value="5TM_YidC_Alb3"/>
    <property type="match status" value="1"/>
</dbReference>
<dbReference type="HAMAP" id="MF_01811">
    <property type="entry name" value="YidC_type2"/>
    <property type="match status" value="1"/>
</dbReference>
<dbReference type="InterPro" id="IPR001708">
    <property type="entry name" value="YidC/ALB3/OXA1/COX18"/>
</dbReference>
<dbReference type="InterPro" id="IPR028055">
    <property type="entry name" value="YidC/Oxa/ALB_C"/>
</dbReference>
<dbReference type="InterPro" id="IPR023060">
    <property type="entry name" value="YidC/YidC1/YidC2_Firmicutes"/>
</dbReference>
<dbReference type="InterPro" id="IPR047196">
    <property type="entry name" value="YidC_ALB_C"/>
</dbReference>
<dbReference type="NCBIfam" id="NF002687">
    <property type="entry name" value="PRK02463.1"/>
    <property type="match status" value="1"/>
</dbReference>
<dbReference type="NCBIfam" id="TIGR03592">
    <property type="entry name" value="yidC_oxa1_cterm"/>
    <property type="match status" value="1"/>
</dbReference>
<dbReference type="PANTHER" id="PTHR12428:SF65">
    <property type="entry name" value="CYTOCHROME C OXIDASE ASSEMBLY PROTEIN COX18, MITOCHONDRIAL"/>
    <property type="match status" value="1"/>
</dbReference>
<dbReference type="PANTHER" id="PTHR12428">
    <property type="entry name" value="OXA1"/>
    <property type="match status" value="1"/>
</dbReference>
<dbReference type="Pfam" id="PF02096">
    <property type="entry name" value="60KD_IMP"/>
    <property type="match status" value="1"/>
</dbReference>
<dbReference type="PRINTS" id="PR00701">
    <property type="entry name" value="60KDINNERMP"/>
</dbReference>
<dbReference type="PROSITE" id="PS51257">
    <property type="entry name" value="PROKAR_LIPOPROTEIN"/>
    <property type="match status" value="1"/>
</dbReference>
<name>YIDC2_STRMU</name>
<proteinExistence type="inferred from homology"/>
<reference key="1">
    <citation type="journal article" date="2002" name="Proc. Natl. Acad. Sci. U.S.A.">
        <title>Genome sequence of Streptococcus mutans UA159, a cariogenic dental pathogen.</title>
        <authorList>
            <person name="Ajdic D.J."/>
            <person name="McShan W.M."/>
            <person name="McLaughlin R.E."/>
            <person name="Savic G."/>
            <person name="Chang J."/>
            <person name="Carson M.B."/>
            <person name="Primeaux C."/>
            <person name="Tian R."/>
            <person name="Kenton S."/>
            <person name="Jia H.G."/>
            <person name="Lin S.P."/>
            <person name="Qian Y."/>
            <person name="Li S."/>
            <person name="Zhu H."/>
            <person name="Najar F.Z."/>
            <person name="Lai H."/>
            <person name="White J."/>
            <person name="Roe B.A."/>
            <person name="Ferretti J.J."/>
        </authorList>
    </citation>
    <scope>NUCLEOTIDE SEQUENCE [LARGE SCALE GENOMIC DNA]</scope>
    <source>
        <strain>ATCC 700610 / UA159</strain>
    </source>
</reference>
<reference key="2">
    <citation type="journal article" date="2005" name="Proc. Natl. Acad. Sci. U.S.A.">
        <title>Streptococcal viability and diminished stress tolerance in mutants lacking the signal recognition particle pathway or YidC2.</title>
        <authorList>
            <person name="Hasona A."/>
            <person name="Crowley P.J."/>
            <person name="Levesque C.M."/>
            <person name="Mair R.W."/>
            <person name="Cvitkovitch D.G."/>
            <person name="Bleiweis A.S."/>
            <person name="Brady L.J."/>
        </authorList>
    </citation>
    <scope>DISRUPTION PHENOTYPE</scope>
    <source>
        <strain>NG8</strain>
    </source>
</reference>
<reference key="3">
    <citation type="journal article" date="2008" name="J. Bacteriol.">
        <title>Functional overlap but lack of complete cross-complementation of Streptococcus mutans and Escherichia coli YidC orthologs.</title>
        <authorList>
            <person name="Dong Y."/>
            <person name="Palmer S.R."/>
            <person name="Hasona A."/>
            <person name="Nagamori S."/>
            <person name="Kaback H.R."/>
            <person name="Dalbey R.E."/>
            <person name="Brady L.J."/>
        </authorList>
    </citation>
    <scope>COMPLEMENTATION BY AND IN E.COLI</scope>
    <source>
        <strain>NG8</strain>
    </source>
</reference>
<comment type="function">
    <text evidence="1">Required for the insertion and/or proper folding and/or complex formation of integral membrane proteins into the membrane. Involved in integration of membrane proteins that insert both dependently and independently of the Sec translocase complex, as well as at least some lipoproteins (By similarity). Partially complements an E.coli yidC depletion experiment.</text>
</comment>
<comment type="subcellular location">
    <subcellularLocation>
        <location evidence="1">Cell membrane</location>
        <topology evidence="1">Multi-pass membrane protein</topology>
    </subcellularLocation>
</comment>
<comment type="disruption phenotype">
    <text evidence="4">Doubling time increases for growth under nonstress conditions, unable to initiate growth at pH 5.0 and under 3.5% NaCl salt stress. Double deletions of yidC2 and SRP (signal recognition particle) components are barely able to grow in the absence of stress. E.coli yidC partially complements this disruption.</text>
</comment>
<comment type="similarity">
    <text evidence="5">Belongs to the OXA1/ALB3/YidC family. Type 2 subfamily.</text>
</comment>
<protein>
    <recommendedName>
        <fullName>Membrane protein insertase YidC 2</fullName>
    </recommendedName>
    <alternativeName>
        <fullName>Foldase YidC 2</fullName>
    </alternativeName>
    <alternativeName>
        <fullName>Membrane integrase YidC 2</fullName>
    </alternativeName>
    <alternativeName>
        <fullName>Membrane protein YidC 2</fullName>
    </alternativeName>
</protein>